<evidence type="ECO:0000255" key="1">
    <source>
        <dbReference type="HAMAP-Rule" id="MF_00246"/>
    </source>
</evidence>
<comment type="function">
    <text evidence="1">Catalyzes the transfer of the gamma-phosphate of ATP to D-galactose to form alpha-D-galactose-1-phosphate (Gal-1-P).</text>
</comment>
<comment type="catalytic activity">
    <reaction evidence="1">
        <text>alpha-D-galactose + ATP = alpha-D-galactose 1-phosphate + ADP + H(+)</text>
        <dbReference type="Rhea" id="RHEA:13553"/>
        <dbReference type="ChEBI" id="CHEBI:15378"/>
        <dbReference type="ChEBI" id="CHEBI:28061"/>
        <dbReference type="ChEBI" id="CHEBI:30616"/>
        <dbReference type="ChEBI" id="CHEBI:58336"/>
        <dbReference type="ChEBI" id="CHEBI:456216"/>
        <dbReference type="EC" id="2.7.1.6"/>
    </reaction>
</comment>
<comment type="pathway">
    <text evidence="1">Carbohydrate metabolism; galactose metabolism.</text>
</comment>
<comment type="subcellular location">
    <subcellularLocation>
        <location evidence="1">Cytoplasm</location>
    </subcellularLocation>
</comment>
<comment type="similarity">
    <text evidence="1">Belongs to the GHMP kinase family. GalK subfamily.</text>
</comment>
<sequence length="387" mass="42429">MNSTDVTKGFTEQFGKQAEHTFFAPGRINLIGEHTDYNGGHVFPCAISLGTYAAVGTNEDNAFRLYSANFQRLALLTSIFGSFQDKRGLWTDYFQGMARVMKTAGANFTHGLNVYINGNLPDGAGLSSSASLEMLVGTILNSLFDGGFEPLELVQFGVKVENDYIGVNSGVMDQFAIEMGRANQATLLDTNTMKYEYLPVEMGDNVIVIMNTNKRRELADSKYNERRSECEKALAMLQKGIEVKSLGQLSEDEFDENTYLIYDPILIKRARHAVFENQRTLKASKALQDGDLKTFGKLVSASGVSLAFDYEVTGIELDTLVTNALKQRGVLGARMTGAGFGGCAIAIVNSADVEDFIDNVGKTYREKIGYDAHFYVADIADGAKQLN</sequence>
<gene>
    <name evidence="1" type="primary">galK</name>
</gene>
<protein>
    <recommendedName>
        <fullName evidence="1">Galactokinase</fullName>
        <ecNumber evidence="1">2.7.1.6</ecNumber>
    </recommendedName>
    <alternativeName>
        <fullName evidence="1">Galactose kinase</fullName>
    </alternativeName>
</protein>
<accession>O84902</accession>
<dbReference type="EC" id="2.7.1.6" evidence="1"/>
<dbReference type="EMBL" id="AF005933">
    <property type="protein sequence ID" value="AAC19328.1"/>
    <property type="molecule type" value="Genomic_DNA"/>
</dbReference>
<dbReference type="SMR" id="O84902"/>
<dbReference type="STRING" id="1582.AAW28_10625"/>
<dbReference type="eggNOG" id="COG0153">
    <property type="taxonomic scope" value="Bacteria"/>
</dbReference>
<dbReference type="UniPathway" id="UPA00214"/>
<dbReference type="GO" id="GO:0005829">
    <property type="term" value="C:cytosol"/>
    <property type="evidence" value="ECO:0007669"/>
    <property type="project" value="TreeGrafter"/>
</dbReference>
<dbReference type="GO" id="GO:0005524">
    <property type="term" value="F:ATP binding"/>
    <property type="evidence" value="ECO:0007669"/>
    <property type="project" value="UniProtKB-UniRule"/>
</dbReference>
<dbReference type="GO" id="GO:0004335">
    <property type="term" value="F:galactokinase activity"/>
    <property type="evidence" value="ECO:0007669"/>
    <property type="project" value="UniProtKB-UniRule"/>
</dbReference>
<dbReference type="GO" id="GO:0000287">
    <property type="term" value="F:magnesium ion binding"/>
    <property type="evidence" value="ECO:0007669"/>
    <property type="project" value="UniProtKB-UniRule"/>
</dbReference>
<dbReference type="GO" id="GO:0006012">
    <property type="term" value="P:galactose metabolic process"/>
    <property type="evidence" value="ECO:0007669"/>
    <property type="project" value="UniProtKB-UniRule"/>
</dbReference>
<dbReference type="FunFam" id="3.30.230.10:FF:000017">
    <property type="entry name" value="Galactokinase"/>
    <property type="match status" value="1"/>
</dbReference>
<dbReference type="FunFam" id="3.30.70.890:FF:000001">
    <property type="entry name" value="Galactokinase"/>
    <property type="match status" value="1"/>
</dbReference>
<dbReference type="Gene3D" id="3.30.230.10">
    <property type="match status" value="1"/>
</dbReference>
<dbReference type="Gene3D" id="3.30.70.890">
    <property type="entry name" value="GHMP kinase, C-terminal domain"/>
    <property type="match status" value="1"/>
</dbReference>
<dbReference type="HAMAP" id="MF_00246">
    <property type="entry name" value="Galactokinase"/>
    <property type="match status" value="1"/>
</dbReference>
<dbReference type="InterPro" id="IPR000705">
    <property type="entry name" value="Galactokinase"/>
</dbReference>
<dbReference type="InterPro" id="IPR022963">
    <property type="entry name" value="Galactokinase_bac"/>
</dbReference>
<dbReference type="InterPro" id="IPR019741">
    <property type="entry name" value="Galactokinase_CS"/>
</dbReference>
<dbReference type="InterPro" id="IPR019539">
    <property type="entry name" value="GalKase_N"/>
</dbReference>
<dbReference type="InterPro" id="IPR013750">
    <property type="entry name" value="GHMP_kinase_C_dom"/>
</dbReference>
<dbReference type="InterPro" id="IPR036554">
    <property type="entry name" value="GHMP_kinase_C_sf"/>
</dbReference>
<dbReference type="InterPro" id="IPR006204">
    <property type="entry name" value="GHMP_kinase_N_dom"/>
</dbReference>
<dbReference type="InterPro" id="IPR006203">
    <property type="entry name" value="GHMP_knse_ATP-bd_CS"/>
</dbReference>
<dbReference type="InterPro" id="IPR006206">
    <property type="entry name" value="Mevalonate/galactokinase"/>
</dbReference>
<dbReference type="InterPro" id="IPR020568">
    <property type="entry name" value="Ribosomal_Su5_D2-typ_SF"/>
</dbReference>
<dbReference type="InterPro" id="IPR014721">
    <property type="entry name" value="Ribsml_uS5_D2-typ_fold_subgr"/>
</dbReference>
<dbReference type="NCBIfam" id="TIGR00131">
    <property type="entry name" value="gal_kin"/>
    <property type="match status" value="1"/>
</dbReference>
<dbReference type="NCBIfam" id="NF003705">
    <property type="entry name" value="PRK05322.1"/>
    <property type="match status" value="1"/>
</dbReference>
<dbReference type="PANTHER" id="PTHR10457:SF7">
    <property type="entry name" value="GALACTOKINASE-RELATED"/>
    <property type="match status" value="1"/>
</dbReference>
<dbReference type="PANTHER" id="PTHR10457">
    <property type="entry name" value="MEVALONATE KINASE/GALACTOKINASE"/>
    <property type="match status" value="1"/>
</dbReference>
<dbReference type="Pfam" id="PF10509">
    <property type="entry name" value="GalKase_gal_bdg"/>
    <property type="match status" value="1"/>
</dbReference>
<dbReference type="Pfam" id="PF08544">
    <property type="entry name" value="GHMP_kinases_C"/>
    <property type="match status" value="1"/>
</dbReference>
<dbReference type="Pfam" id="PF00288">
    <property type="entry name" value="GHMP_kinases_N"/>
    <property type="match status" value="1"/>
</dbReference>
<dbReference type="PIRSF" id="PIRSF000530">
    <property type="entry name" value="Galactokinase"/>
    <property type="match status" value="1"/>
</dbReference>
<dbReference type="PRINTS" id="PR00473">
    <property type="entry name" value="GALCTOKINASE"/>
</dbReference>
<dbReference type="PRINTS" id="PR00959">
    <property type="entry name" value="MEVGALKINASE"/>
</dbReference>
<dbReference type="SUPFAM" id="SSF55060">
    <property type="entry name" value="GHMP Kinase, C-terminal domain"/>
    <property type="match status" value="1"/>
</dbReference>
<dbReference type="SUPFAM" id="SSF54211">
    <property type="entry name" value="Ribosomal protein S5 domain 2-like"/>
    <property type="match status" value="1"/>
</dbReference>
<dbReference type="PROSITE" id="PS00106">
    <property type="entry name" value="GALACTOKINASE"/>
    <property type="match status" value="1"/>
</dbReference>
<dbReference type="PROSITE" id="PS00627">
    <property type="entry name" value="GHMP_KINASES_ATP"/>
    <property type="match status" value="1"/>
</dbReference>
<proteinExistence type="inferred from homology"/>
<keyword id="KW-0067">ATP-binding</keyword>
<keyword id="KW-0119">Carbohydrate metabolism</keyword>
<keyword id="KW-0963">Cytoplasm</keyword>
<keyword id="KW-0299">Galactose metabolism</keyword>
<keyword id="KW-0418">Kinase</keyword>
<keyword id="KW-0460">Magnesium</keyword>
<keyword id="KW-0479">Metal-binding</keyword>
<keyword id="KW-0547">Nucleotide-binding</keyword>
<keyword id="KW-0808">Transferase</keyword>
<organism>
    <name type="scientific">Lacticaseibacillus casei</name>
    <name type="common">Lactobacillus casei</name>
    <dbReference type="NCBI Taxonomy" id="1582"/>
    <lineage>
        <taxon>Bacteria</taxon>
        <taxon>Bacillati</taxon>
        <taxon>Bacillota</taxon>
        <taxon>Bacilli</taxon>
        <taxon>Lactobacillales</taxon>
        <taxon>Lactobacillaceae</taxon>
        <taxon>Lacticaseibacillus</taxon>
    </lineage>
</organism>
<reference key="1">
    <citation type="journal article" date="1998" name="Appl. Environ. Microbiol.">
        <title>The gal genes for the Leloir pathway of Lactobacillus casei 64H.</title>
        <authorList>
            <person name="Bettenbrock K."/>
            <person name="Alpert C.-A."/>
        </authorList>
    </citation>
    <scope>NUCLEOTIDE SEQUENCE [GENOMIC DNA]</scope>
    <source>
        <strain>64H</strain>
    </source>
</reference>
<name>GAL1_LACCA</name>
<feature type="chain" id="PRO_0000184613" description="Galactokinase">
    <location>
        <begin position="1"/>
        <end position="387"/>
    </location>
</feature>
<feature type="active site" description="Proton acceptor" evidence="1">
    <location>
        <position position="173"/>
    </location>
</feature>
<feature type="binding site" evidence="1">
    <location>
        <begin position="33"/>
        <end position="36"/>
    </location>
    <ligand>
        <name>substrate</name>
    </ligand>
</feature>
<feature type="binding site" evidence="1">
    <location>
        <position position="67"/>
    </location>
    <ligand>
        <name>ATP</name>
        <dbReference type="ChEBI" id="CHEBI:30616"/>
    </ligand>
</feature>
<feature type="binding site" evidence="1">
    <location>
        <begin position="123"/>
        <end position="129"/>
    </location>
    <ligand>
        <name>ATP</name>
        <dbReference type="ChEBI" id="CHEBI:30616"/>
    </ligand>
</feature>
<feature type="binding site" evidence="1">
    <location>
        <position position="129"/>
    </location>
    <ligand>
        <name>Mg(2+)</name>
        <dbReference type="ChEBI" id="CHEBI:18420"/>
    </ligand>
</feature>
<feature type="binding site" evidence="1">
    <location>
        <position position="161"/>
    </location>
    <ligand>
        <name>Mg(2+)</name>
        <dbReference type="ChEBI" id="CHEBI:18420"/>
    </ligand>
</feature>
<feature type="binding site" evidence="1">
    <location>
        <position position="223"/>
    </location>
    <ligand>
        <name>substrate</name>
    </ligand>
</feature>
<feature type="site" description="Transition state stabilizer" evidence="1">
    <location>
        <position position="27"/>
    </location>
</feature>